<name>HFQ_BACC2</name>
<feature type="chain" id="PRO_1000190305" description="RNA-binding protein Hfq">
    <location>
        <begin position="1"/>
        <end position="74"/>
    </location>
</feature>
<feature type="domain" description="Sm" evidence="2">
    <location>
        <begin position="9"/>
        <end position="69"/>
    </location>
</feature>
<evidence type="ECO:0000255" key="1">
    <source>
        <dbReference type="HAMAP-Rule" id="MF_00436"/>
    </source>
</evidence>
<evidence type="ECO:0000255" key="2">
    <source>
        <dbReference type="PROSITE-ProRule" id="PRU01346"/>
    </source>
</evidence>
<reference key="1">
    <citation type="submission" date="2008-10" db="EMBL/GenBank/DDBJ databases">
        <title>Genome sequence of Bacillus cereus G9842.</title>
        <authorList>
            <person name="Dodson R.J."/>
            <person name="Durkin A.S."/>
            <person name="Rosovitz M.J."/>
            <person name="Rasko D.A."/>
            <person name="Hoffmaster A."/>
            <person name="Ravel J."/>
            <person name="Sutton G."/>
        </authorList>
    </citation>
    <scope>NUCLEOTIDE SEQUENCE [LARGE SCALE GENOMIC DNA]</scope>
    <source>
        <strain>G9842</strain>
    </source>
</reference>
<organism>
    <name type="scientific">Bacillus cereus (strain G9842)</name>
    <dbReference type="NCBI Taxonomy" id="405531"/>
    <lineage>
        <taxon>Bacteria</taxon>
        <taxon>Bacillati</taxon>
        <taxon>Bacillota</taxon>
        <taxon>Bacilli</taxon>
        <taxon>Bacillales</taxon>
        <taxon>Bacillaceae</taxon>
        <taxon>Bacillus</taxon>
        <taxon>Bacillus cereus group</taxon>
    </lineage>
</organism>
<comment type="function">
    <text evidence="1">RNA chaperone that binds small regulatory RNA (sRNAs) and mRNAs to facilitate mRNA translational regulation in response to envelope stress, environmental stress and changes in metabolite concentrations. Also binds with high specificity to tRNAs.</text>
</comment>
<comment type="subunit">
    <text evidence="1">Homohexamer.</text>
</comment>
<comment type="similarity">
    <text evidence="1">Belongs to the Hfq family.</text>
</comment>
<protein>
    <recommendedName>
        <fullName evidence="1">RNA-binding protein Hfq</fullName>
    </recommendedName>
</protein>
<keyword id="KW-0694">RNA-binding</keyword>
<keyword id="KW-0346">Stress response</keyword>
<accession>B7ISQ8</accession>
<sequence length="74" mass="8646">MKQSINIQDQFLNQLRKENTFVTLYLLNGFQLRGLIKGFDNFTVLLETEGKQQLIYKHAISTFVPQKNVSIELE</sequence>
<proteinExistence type="inferred from homology"/>
<gene>
    <name evidence="1" type="primary">hfq</name>
    <name type="ordered locus">BCG9842_B1490</name>
</gene>
<dbReference type="EMBL" id="CP001186">
    <property type="protein sequence ID" value="ACK96418.1"/>
    <property type="molecule type" value="Genomic_DNA"/>
</dbReference>
<dbReference type="RefSeq" id="WP_000813896.1">
    <property type="nucleotide sequence ID" value="NC_011772.1"/>
</dbReference>
<dbReference type="SMR" id="B7ISQ8"/>
<dbReference type="GeneID" id="93007416"/>
<dbReference type="KEGG" id="bcg:BCG9842_B1490"/>
<dbReference type="HOGENOM" id="CLU_113688_3_0_9"/>
<dbReference type="Proteomes" id="UP000006744">
    <property type="component" value="Chromosome"/>
</dbReference>
<dbReference type="GO" id="GO:0005829">
    <property type="term" value="C:cytosol"/>
    <property type="evidence" value="ECO:0007669"/>
    <property type="project" value="TreeGrafter"/>
</dbReference>
<dbReference type="GO" id="GO:0003723">
    <property type="term" value="F:RNA binding"/>
    <property type="evidence" value="ECO:0007669"/>
    <property type="project" value="UniProtKB-UniRule"/>
</dbReference>
<dbReference type="GO" id="GO:0006355">
    <property type="term" value="P:regulation of DNA-templated transcription"/>
    <property type="evidence" value="ECO:0007669"/>
    <property type="project" value="InterPro"/>
</dbReference>
<dbReference type="GO" id="GO:0043487">
    <property type="term" value="P:regulation of RNA stability"/>
    <property type="evidence" value="ECO:0007669"/>
    <property type="project" value="TreeGrafter"/>
</dbReference>
<dbReference type="GO" id="GO:0045974">
    <property type="term" value="P:regulation of translation, ncRNA-mediated"/>
    <property type="evidence" value="ECO:0007669"/>
    <property type="project" value="TreeGrafter"/>
</dbReference>
<dbReference type="CDD" id="cd01716">
    <property type="entry name" value="Hfq"/>
    <property type="match status" value="1"/>
</dbReference>
<dbReference type="FunFam" id="2.30.30.100:FF:000012">
    <property type="entry name" value="RNA-binding protein Hfq"/>
    <property type="match status" value="1"/>
</dbReference>
<dbReference type="Gene3D" id="2.30.30.100">
    <property type="match status" value="1"/>
</dbReference>
<dbReference type="HAMAP" id="MF_00436">
    <property type="entry name" value="Hfq"/>
    <property type="match status" value="1"/>
</dbReference>
<dbReference type="InterPro" id="IPR005001">
    <property type="entry name" value="Hfq"/>
</dbReference>
<dbReference type="InterPro" id="IPR010920">
    <property type="entry name" value="LSM_dom_sf"/>
</dbReference>
<dbReference type="InterPro" id="IPR047575">
    <property type="entry name" value="Sm"/>
</dbReference>
<dbReference type="NCBIfam" id="TIGR02383">
    <property type="entry name" value="Hfq"/>
    <property type="match status" value="1"/>
</dbReference>
<dbReference type="NCBIfam" id="NF001602">
    <property type="entry name" value="PRK00395.1"/>
    <property type="match status" value="1"/>
</dbReference>
<dbReference type="PANTHER" id="PTHR34772">
    <property type="entry name" value="RNA-BINDING PROTEIN HFQ"/>
    <property type="match status" value="1"/>
</dbReference>
<dbReference type="PANTHER" id="PTHR34772:SF1">
    <property type="entry name" value="RNA-BINDING PROTEIN HFQ"/>
    <property type="match status" value="1"/>
</dbReference>
<dbReference type="Pfam" id="PF17209">
    <property type="entry name" value="Hfq"/>
    <property type="match status" value="1"/>
</dbReference>
<dbReference type="SUPFAM" id="SSF50182">
    <property type="entry name" value="Sm-like ribonucleoproteins"/>
    <property type="match status" value="1"/>
</dbReference>
<dbReference type="PROSITE" id="PS52002">
    <property type="entry name" value="SM"/>
    <property type="match status" value="1"/>
</dbReference>